<proteinExistence type="inferred from homology"/>
<name>CGR1_ASPCL</name>
<accession>A1C8E1</accession>
<feature type="chain" id="PRO_0000278945" description="rRNA-processing protein cgrA">
    <location>
        <begin position="1"/>
        <end position="113"/>
    </location>
</feature>
<feature type="region of interest" description="Disordered" evidence="3">
    <location>
        <begin position="1"/>
        <end position="113"/>
    </location>
</feature>
<feature type="coiled-coil region" evidence="2">
    <location>
        <begin position="37"/>
        <end position="100"/>
    </location>
</feature>
<feature type="compositionally biased region" description="Polar residues" evidence="3">
    <location>
        <begin position="1"/>
        <end position="15"/>
    </location>
</feature>
<feature type="compositionally biased region" description="Basic and acidic residues" evidence="3">
    <location>
        <begin position="38"/>
        <end position="92"/>
    </location>
</feature>
<feature type="compositionally biased region" description="Basic residues" evidence="3">
    <location>
        <begin position="93"/>
        <end position="113"/>
    </location>
</feature>
<sequence>MSTITTSSVASSNGMRKNGKNWHDSKKPFRPTSGLTSYEKRLEARKLQEAVKEHEREMREEREAERKAQIQKIKDRRAAKEEKERYEKMAEKMHRKRVERLKRREKRNKLLHS</sequence>
<keyword id="KW-0175">Coiled coil</keyword>
<keyword id="KW-0539">Nucleus</keyword>
<keyword id="KW-1185">Reference proteome</keyword>
<keyword id="KW-0690">Ribosome biogenesis</keyword>
<keyword id="KW-0698">rRNA processing</keyword>
<evidence type="ECO:0000250" key="1"/>
<evidence type="ECO:0000255" key="2"/>
<evidence type="ECO:0000256" key="3">
    <source>
        <dbReference type="SAM" id="MobiDB-lite"/>
    </source>
</evidence>
<evidence type="ECO:0000305" key="4"/>
<protein>
    <recommendedName>
        <fullName>rRNA-processing protein cgrA</fullName>
    </recommendedName>
</protein>
<organism>
    <name type="scientific">Aspergillus clavatus (strain ATCC 1007 / CBS 513.65 / DSM 816 / NCTC 3887 / NRRL 1 / QM 1276 / 107)</name>
    <dbReference type="NCBI Taxonomy" id="344612"/>
    <lineage>
        <taxon>Eukaryota</taxon>
        <taxon>Fungi</taxon>
        <taxon>Dikarya</taxon>
        <taxon>Ascomycota</taxon>
        <taxon>Pezizomycotina</taxon>
        <taxon>Eurotiomycetes</taxon>
        <taxon>Eurotiomycetidae</taxon>
        <taxon>Eurotiales</taxon>
        <taxon>Aspergillaceae</taxon>
        <taxon>Aspergillus</taxon>
        <taxon>Aspergillus subgen. Fumigati</taxon>
    </lineage>
</organism>
<gene>
    <name type="primary">cgrA</name>
    <name type="synonym">cgr1</name>
    <name type="ORF">ACLA_042960</name>
</gene>
<comment type="function">
    <text evidence="1">Involved in nucleolar integrity and required for processing of the pre-rRNA for the 60S ribosome subunit.</text>
</comment>
<comment type="subcellular location">
    <subcellularLocation>
        <location evidence="1">Nucleus</location>
        <location evidence="1">Nucleolus</location>
    </subcellularLocation>
</comment>
<comment type="similarity">
    <text evidence="4">Belongs to the CGR1 family.</text>
</comment>
<dbReference type="EMBL" id="DS027046">
    <property type="protein sequence ID" value="EAW13578.1"/>
    <property type="molecule type" value="Genomic_DNA"/>
</dbReference>
<dbReference type="RefSeq" id="XP_001275004.1">
    <property type="nucleotide sequence ID" value="XM_001275003.1"/>
</dbReference>
<dbReference type="SMR" id="A1C8E1"/>
<dbReference type="STRING" id="344612.A1C8E1"/>
<dbReference type="EnsemblFungi" id="EAW13578">
    <property type="protein sequence ID" value="EAW13578"/>
    <property type="gene ID" value="ACLA_042960"/>
</dbReference>
<dbReference type="GeneID" id="4707268"/>
<dbReference type="KEGG" id="act:ACLA_042960"/>
<dbReference type="VEuPathDB" id="FungiDB:ACLA_042960"/>
<dbReference type="eggNOG" id="ENOG502S7VB">
    <property type="taxonomic scope" value="Eukaryota"/>
</dbReference>
<dbReference type="HOGENOM" id="CLU_125051_0_0_1"/>
<dbReference type="OMA" id="NGKQWHD"/>
<dbReference type="OrthoDB" id="3942380at2759"/>
<dbReference type="Proteomes" id="UP000006701">
    <property type="component" value="Unassembled WGS sequence"/>
</dbReference>
<dbReference type="GO" id="GO:0005730">
    <property type="term" value="C:nucleolus"/>
    <property type="evidence" value="ECO:0007669"/>
    <property type="project" value="UniProtKB-SubCell"/>
</dbReference>
<dbReference type="GO" id="GO:0006364">
    <property type="term" value="P:rRNA processing"/>
    <property type="evidence" value="ECO:0007669"/>
    <property type="project" value="UniProtKB-KW"/>
</dbReference>
<dbReference type="InterPro" id="IPR005579">
    <property type="entry name" value="Cgr1-like"/>
</dbReference>
<dbReference type="Pfam" id="PF03879">
    <property type="entry name" value="Cgr1"/>
    <property type="match status" value="1"/>
</dbReference>
<reference key="1">
    <citation type="journal article" date="2008" name="PLoS Genet.">
        <title>Genomic islands in the pathogenic filamentous fungus Aspergillus fumigatus.</title>
        <authorList>
            <person name="Fedorova N.D."/>
            <person name="Khaldi N."/>
            <person name="Joardar V.S."/>
            <person name="Maiti R."/>
            <person name="Amedeo P."/>
            <person name="Anderson M.J."/>
            <person name="Crabtree J."/>
            <person name="Silva J.C."/>
            <person name="Badger J.H."/>
            <person name="Albarraq A."/>
            <person name="Angiuoli S."/>
            <person name="Bussey H."/>
            <person name="Bowyer P."/>
            <person name="Cotty P.J."/>
            <person name="Dyer P.S."/>
            <person name="Egan A."/>
            <person name="Galens K."/>
            <person name="Fraser-Liggett C.M."/>
            <person name="Haas B.J."/>
            <person name="Inman J.M."/>
            <person name="Kent R."/>
            <person name="Lemieux S."/>
            <person name="Malavazi I."/>
            <person name="Orvis J."/>
            <person name="Roemer T."/>
            <person name="Ronning C.M."/>
            <person name="Sundaram J.P."/>
            <person name="Sutton G."/>
            <person name="Turner G."/>
            <person name="Venter J.C."/>
            <person name="White O.R."/>
            <person name="Whitty B.R."/>
            <person name="Youngman P."/>
            <person name="Wolfe K.H."/>
            <person name="Goldman G.H."/>
            <person name="Wortman J.R."/>
            <person name="Jiang B."/>
            <person name="Denning D.W."/>
            <person name="Nierman W.C."/>
        </authorList>
    </citation>
    <scope>NUCLEOTIDE SEQUENCE [LARGE SCALE GENOMIC DNA]</scope>
    <source>
        <strain>ATCC 1007 / CBS 513.65 / DSM 816 / NCTC 3887 / NRRL 1 / QM 1276 / 107</strain>
    </source>
</reference>